<sequence>MIFYPTESLILGLFIMAASLLFAYFQNDLDSYYFKRK</sequence>
<gene>
    <name type="primary">A1</name>
</gene>
<feature type="signal peptide" evidence="1">
    <location>
        <begin position="1"/>
        <end position="22"/>
    </location>
</feature>
<feature type="chain" id="PRO_0000003350" description="Probable protein A1">
    <location>
        <begin position="23"/>
        <end position="37" status="greater than"/>
    </location>
</feature>
<feature type="non-terminal residue">
    <location>
        <position position="37"/>
    </location>
</feature>
<reference key="1">
    <citation type="journal article" date="1990" name="Virology">
        <title>Characterization of preearly genes in the terminal repetition of bacteriophage BF23 DNA by nucleotide sequencing and restriction mapping.</title>
        <authorList>
            <person name="Wiest J.S."/>
            <person name="McCorquodale D.J."/>
        </authorList>
    </citation>
    <scope>NUCLEOTIDE SEQUENCE [GENOMIC DNA]</scope>
    <source>
        <strain>Wild-type</strain>
    </source>
</reference>
<accession>P19347</accession>
<keyword id="KW-0678">Repressor</keyword>
<keyword id="KW-0732">Signal</keyword>
<keyword id="KW-0804">Transcription</keyword>
<keyword id="KW-0805">Transcription regulation</keyword>
<proteinExistence type="predicted"/>
<name>VA1_BPBF2</name>
<evidence type="ECO:0000305" key="1"/>
<comment type="function">
    <text>Proteins A1 and A2-A3 are necessary for completion of phage DNA transfer. A1 is also required for the shut-off of expression of pre-early genes.</text>
</comment>
<organismHost>
    <name type="scientific">Escherichia coli</name>
    <dbReference type="NCBI Taxonomy" id="562"/>
</organismHost>
<organismHost>
    <name type="scientific">Salmonella typhimurium</name>
    <dbReference type="NCBI Taxonomy" id="90371"/>
</organismHost>
<protein>
    <recommendedName>
        <fullName>Probable protein A1</fullName>
    </recommendedName>
</protein>
<organism>
    <name type="scientific">Escherichia phage Bf23</name>
    <name type="common">Enterobacteria phage BF23</name>
    <dbReference type="NCBI Taxonomy" id="10707"/>
    <lineage>
        <taxon>Viruses</taxon>
        <taxon>Duplodnaviria</taxon>
        <taxon>Heunggongvirae</taxon>
        <taxon>Uroviricota</taxon>
        <taxon>Caudoviricetes</taxon>
        <taxon>Demerecviridae</taxon>
        <taxon>Markadamsvirinae</taxon>
        <taxon>Tequintavirus</taxon>
    </lineage>
</organism>
<dbReference type="EMBL" id="M37095">
    <property type="protein sequence ID" value="AAA32180.1"/>
    <property type="molecule type" value="Genomic_DNA"/>
</dbReference>
<dbReference type="PIR" id="C46348">
    <property type="entry name" value="C46348"/>
</dbReference>
<dbReference type="SMR" id="P19347"/>